<dbReference type="EC" id="5.1.3.2"/>
<dbReference type="EMBL" id="CP000087">
    <property type="protein sequence ID" value="ABE04790.1"/>
    <property type="molecule type" value="Genomic_DNA"/>
</dbReference>
<dbReference type="RefSeq" id="WP_011477377.1">
    <property type="nucleotide sequence ID" value="NC_007940.1"/>
</dbReference>
<dbReference type="SMR" id="Q1RIM4"/>
<dbReference type="KEGG" id="rbe:RBE_0709"/>
<dbReference type="eggNOG" id="COG1086">
    <property type="taxonomic scope" value="Bacteria"/>
</dbReference>
<dbReference type="HOGENOM" id="CLU_013560_4_1_5"/>
<dbReference type="OrthoDB" id="9803111at2"/>
<dbReference type="Proteomes" id="UP000001951">
    <property type="component" value="Chromosome"/>
</dbReference>
<dbReference type="GO" id="GO:0003978">
    <property type="term" value="F:UDP-glucose 4-epimerase activity"/>
    <property type="evidence" value="ECO:0007669"/>
    <property type="project" value="UniProtKB-EC"/>
</dbReference>
<dbReference type="GO" id="GO:0009103">
    <property type="term" value="P:lipopolysaccharide biosynthetic process"/>
    <property type="evidence" value="ECO:0007669"/>
    <property type="project" value="UniProtKB-KW"/>
</dbReference>
<dbReference type="CDD" id="cd05237">
    <property type="entry name" value="UDP_invert_4-6DH_SDR_e"/>
    <property type="match status" value="1"/>
</dbReference>
<dbReference type="Gene3D" id="3.40.50.720">
    <property type="entry name" value="NAD(P)-binding Rossmann-like Domain"/>
    <property type="match status" value="1"/>
</dbReference>
<dbReference type="InterPro" id="IPR013692">
    <property type="entry name" value="CapD_C"/>
</dbReference>
<dbReference type="InterPro" id="IPR036291">
    <property type="entry name" value="NAD(P)-bd_dom_sf"/>
</dbReference>
<dbReference type="InterPro" id="IPR003869">
    <property type="entry name" value="Polysac_CapD-like"/>
</dbReference>
<dbReference type="InterPro" id="IPR051203">
    <property type="entry name" value="Polysaccharide_Synthase-Rel"/>
</dbReference>
<dbReference type="PANTHER" id="PTHR43318">
    <property type="entry name" value="UDP-N-ACETYLGLUCOSAMINE 4,6-DEHYDRATASE"/>
    <property type="match status" value="1"/>
</dbReference>
<dbReference type="PANTHER" id="PTHR43318:SF2">
    <property type="entry name" value="UDP-N-ACETYLGLUCOSAMINE 4,6-DEHYDRATASE (INVERTING)"/>
    <property type="match status" value="1"/>
</dbReference>
<dbReference type="Pfam" id="PF08485">
    <property type="entry name" value="Polysacc_syn_2C"/>
    <property type="match status" value="1"/>
</dbReference>
<dbReference type="Pfam" id="PF02719">
    <property type="entry name" value="Polysacc_synt_2"/>
    <property type="match status" value="1"/>
</dbReference>
<dbReference type="SUPFAM" id="SSF51735">
    <property type="entry name" value="NAD(P)-binding Rossmann-fold domains"/>
    <property type="match status" value="1"/>
</dbReference>
<evidence type="ECO:0000250" key="1"/>
<evidence type="ECO:0000305" key="2"/>
<keyword id="KW-0413">Isomerase</keyword>
<keyword id="KW-0448">Lipopolysaccharide biosynthesis</keyword>
<feature type="chain" id="PRO_0000314601" description="UDP-glucose 4-epimerase">
    <location>
        <begin position="1"/>
        <end position="341"/>
    </location>
</feature>
<protein>
    <recommendedName>
        <fullName>UDP-glucose 4-epimerase</fullName>
        <ecNumber>5.1.3.2</ecNumber>
    </recommendedName>
    <alternativeName>
        <fullName>Galactowaldenase</fullName>
    </alternativeName>
    <alternativeName>
        <fullName>UDP-galactose 4-epimerase</fullName>
    </alternativeName>
</protein>
<gene>
    <name type="primary">capD</name>
    <name type="ordered locus">RBE_0709</name>
</gene>
<reference key="1">
    <citation type="journal article" date="2006" name="PLoS Genet.">
        <title>Genome sequence of Rickettsia bellii illuminates the role of amoebae in gene exchanges between intracellular pathogens.</title>
        <authorList>
            <person name="Ogata H."/>
            <person name="La Scola B."/>
            <person name="Audic S."/>
            <person name="Renesto P."/>
            <person name="Blanc G."/>
            <person name="Robert C."/>
            <person name="Fournier P.-E."/>
            <person name="Claverie J.-M."/>
            <person name="Raoult D."/>
        </authorList>
    </citation>
    <scope>NUCLEOTIDE SEQUENCE [LARGE SCALE GENOMIC DNA]</scope>
    <source>
        <strain>RML369-C</strain>
    </source>
</reference>
<comment type="function">
    <text evidence="1">Epimerizes UDP-galactose to UDP-glucose.</text>
</comment>
<comment type="catalytic activity">
    <reaction>
        <text>UDP-alpha-D-glucose = UDP-alpha-D-galactose</text>
        <dbReference type="Rhea" id="RHEA:22168"/>
        <dbReference type="ChEBI" id="CHEBI:58885"/>
        <dbReference type="ChEBI" id="CHEBI:66914"/>
        <dbReference type="EC" id="5.1.3.2"/>
    </reaction>
</comment>
<comment type="similarity">
    <text evidence="2">Belongs to the polysaccharide synthase family.</text>
</comment>
<name>CAPD_RICBR</name>
<proteinExistence type="inferred from homology"/>
<sequence>MFVDKTLLITGGTGSFGNAVLSRFLKNDIIKDIKEIRIFSRDEKKQEDMRIALNNPKIKFYIGDVRNYNSIDDAMKGVDYVFHAAALKQVPTCEFYPMEAINTNILGAENVLRAATINKVAKVIVLSTDKAVYPINAMGLSKALMEKLAIAKARMNVRDKTVFCVTRYGNVMASRGSVIPLFINQIKQNKDLTITEPSMTRFLMSLVDSVDLVLYAFEYGHQGDIFVQKSPASTIEVLAKALQGIFNSKNKIRFIGTRHGEKHYESLVSSEEMAKAEDLGNYYRIPMDGRDLNYAKYFVEGEKKIALLEDYTSHNTKRLNLEEVKELLLNLDYVQEELKNA</sequence>
<organism>
    <name type="scientific">Rickettsia bellii (strain RML369-C)</name>
    <dbReference type="NCBI Taxonomy" id="336407"/>
    <lineage>
        <taxon>Bacteria</taxon>
        <taxon>Pseudomonadati</taxon>
        <taxon>Pseudomonadota</taxon>
        <taxon>Alphaproteobacteria</taxon>
        <taxon>Rickettsiales</taxon>
        <taxon>Rickettsiaceae</taxon>
        <taxon>Rickettsieae</taxon>
        <taxon>Rickettsia</taxon>
        <taxon>belli group</taxon>
    </lineage>
</organism>
<accession>Q1RIM4</accession>